<comment type="function">
    <text evidence="1">Hydrolyzes ribosome-free peptidyl-tRNAs (with 1 or more amino acids incorporated), which drop off the ribosome during protein synthesis, or as a result of ribosome stalling.</text>
</comment>
<comment type="function">
    <text evidence="1">Catalyzes the release of premature peptidyl moieties from peptidyl-tRNA molecules trapped in stalled 50S ribosomal subunits, and thus maintains levels of free tRNAs and 50S ribosomes.</text>
</comment>
<comment type="catalytic activity">
    <reaction evidence="1">
        <text>an N-acyl-L-alpha-aminoacyl-tRNA + H2O = an N-acyl-L-amino acid + a tRNA + H(+)</text>
        <dbReference type="Rhea" id="RHEA:54448"/>
        <dbReference type="Rhea" id="RHEA-COMP:10123"/>
        <dbReference type="Rhea" id="RHEA-COMP:13883"/>
        <dbReference type="ChEBI" id="CHEBI:15377"/>
        <dbReference type="ChEBI" id="CHEBI:15378"/>
        <dbReference type="ChEBI" id="CHEBI:59874"/>
        <dbReference type="ChEBI" id="CHEBI:78442"/>
        <dbReference type="ChEBI" id="CHEBI:138191"/>
        <dbReference type="EC" id="3.1.1.29"/>
    </reaction>
</comment>
<comment type="subunit">
    <text evidence="1">Monomer.</text>
</comment>
<comment type="subcellular location">
    <subcellularLocation>
        <location evidence="1">Cytoplasm</location>
    </subcellularLocation>
</comment>
<comment type="similarity">
    <text evidence="1">Belongs to the PTH family.</text>
</comment>
<comment type="sequence caution" evidence="2">
    <conflict type="erroneous initiation">
        <sequence resource="EMBL-CDS" id="ABG17822"/>
    </conflict>
    <text>Extended N-terminus.</text>
</comment>
<sequence length="196" mass="21271">MSSIKLIVGLANPGAEYAQTRHNAGAWYVDLLAERHNQSLKEESKFFGYTARLNLAGQDIRLLVPATFMNLSGKAVAAMASFYRILPEEILVAHDELDILPGMAKLKLGGGNGGHNGLKDIQNKLGNNPNFYRLRIGIGHPGDKSKVTGFVLGKPPASEQTLIDDAIDESIRCTEVLLNEGMTKAMNRLHAFKASA</sequence>
<proteinExistence type="inferred from homology"/>
<name>PTH_YERPN</name>
<dbReference type="EC" id="3.1.1.29" evidence="1"/>
<dbReference type="EMBL" id="CP000305">
    <property type="protein sequence ID" value="ABG17822.1"/>
    <property type="status" value="ALT_INIT"/>
    <property type="molecule type" value="Genomic_DNA"/>
</dbReference>
<dbReference type="EMBL" id="ACNQ01000009">
    <property type="protein sequence ID" value="EEO76923.1"/>
    <property type="molecule type" value="Genomic_DNA"/>
</dbReference>
<dbReference type="RefSeq" id="WP_002218168.1">
    <property type="nucleotide sequence ID" value="NZ_ACNQ01000009.1"/>
</dbReference>
<dbReference type="SMR" id="Q1CJK8"/>
<dbReference type="GeneID" id="96665494"/>
<dbReference type="KEGG" id="ypn:YPN_1492"/>
<dbReference type="HOGENOM" id="CLU_062456_3_1_6"/>
<dbReference type="Proteomes" id="UP000008936">
    <property type="component" value="Chromosome"/>
</dbReference>
<dbReference type="GO" id="GO:0005737">
    <property type="term" value="C:cytoplasm"/>
    <property type="evidence" value="ECO:0007669"/>
    <property type="project" value="UniProtKB-SubCell"/>
</dbReference>
<dbReference type="GO" id="GO:0004045">
    <property type="term" value="F:peptidyl-tRNA hydrolase activity"/>
    <property type="evidence" value="ECO:0007669"/>
    <property type="project" value="UniProtKB-UniRule"/>
</dbReference>
<dbReference type="GO" id="GO:0000049">
    <property type="term" value="F:tRNA binding"/>
    <property type="evidence" value="ECO:0007669"/>
    <property type="project" value="UniProtKB-UniRule"/>
</dbReference>
<dbReference type="GO" id="GO:0006515">
    <property type="term" value="P:protein quality control for misfolded or incompletely synthesized proteins"/>
    <property type="evidence" value="ECO:0007669"/>
    <property type="project" value="UniProtKB-UniRule"/>
</dbReference>
<dbReference type="GO" id="GO:0072344">
    <property type="term" value="P:rescue of stalled ribosome"/>
    <property type="evidence" value="ECO:0007669"/>
    <property type="project" value="UniProtKB-UniRule"/>
</dbReference>
<dbReference type="CDD" id="cd00462">
    <property type="entry name" value="PTH"/>
    <property type="match status" value="1"/>
</dbReference>
<dbReference type="FunFam" id="3.40.50.1470:FF:000001">
    <property type="entry name" value="Peptidyl-tRNA hydrolase"/>
    <property type="match status" value="1"/>
</dbReference>
<dbReference type="Gene3D" id="3.40.50.1470">
    <property type="entry name" value="Peptidyl-tRNA hydrolase"/>
    <property type="match status" value="1"/>
</dbReference>
<dbReference type="HAMAP" id="MF_00083">
    <property type="entry name" value="Pept_tRNA_hydro_bact"/>
    <property type="match status" value="1"/>
</dbReference>
<dbReference type="InterPro" id="IPR001328">
    <property type="entry name" value="Pept_tRNA_hydro"/>
</dbReference>
<dbReference type="InterPro" id="IPR018171">
    <property type="entry name" value="Pept_tRNA_hydro_CS"/>
</dbReference>
<dbReference type="InterPro" id="IPR036416">
    <property type="entry name" value="Pept_tRNA_hydro_sf"/>
</dbReference>
<dbReference type="NCBIfam" id="TIGR00447">
    <property type="entry name" value="pth"/>
    <property type="match status" value="1"/>
</dbReference>
<dbReference type="PANTHER" id="PTHR17224">
    <property type="entry name" value="PEPTIDYL-TRNA HYDROLASE"/>
    <property type="match status" value="1"/>
</dbReference>
<dbReference type="PANTHER" id="PTHR17224:SF1">
    <property type="entry name" value="PEPTIDYL-TRNA HYDROLASE"/>
    <property type="match status" value="1"/>
</dbReference>
<dbReference type="Pfam" id="PF01195">
    <property type="entry name" value="Pept_tRNA_hydro"/>
    <property type="match status" value="1"/>
</dbReference>
<dbReference type="SUPFAM" id="SSF53178">
    <property type="entry name" value="Peptidyl-tRNA hydrolase-like"/>
    <property type="match status" value="1"/>
</dbReference>
<dbReference type="PROSITE" id="PS01195">
    <property type="entry name" value="PEPT_TRNA_HYDROL_1"/>
    <property type="match status" value="1"/>
</dbReference>
<dbReference type="PROSITE" id="PS01196">
    <property type="entry name" value="PEPT_TRNA_HYDROL_2"/>
    <property type="match status" value="1"/>
</dbReference>
<reference key="1">
    <citation type="journal article" date="2006" name="J. Bacteriol.">
        <title>Complete genome sequence of Yersinia pestis strains Antiqua and Nepal516: evidence of gene reduction in an emerging pathogen.</title>
        <authorList>
            <person name="Chain P.S.G."/>
            <person name="Hu P."/>
            <person name="Malfatti S.A."/>
            <person name="Radnedge L."/>
            <person name="Larimer F."/>
            <person name="Vergez L.M."/>
            <person name="Worsham P."/>
            <person name="Chu M.C."/>
            <person name="Andersen G.L."/>
        </authorList>
    </citation>
    <scope>NUCLEOTIDE SEQUENCE [LARGE SCALE GENOMIC DNA]</scope>
    <source>
        <strain>Nepal516</strain>
    </source>
</reference>
<reference key="2">
    <citation type="submission" date="2009-04" db="EMBL/GenBank/DDBJ databases">
        <title>Yersinia pestis Nepal516A whole genome shotgun sequencing project.</title>
        <authorList>
            <person name="Plunkett G. III"/>
            <person name="Anderson B.D."/>
            <person name="Baumler D.J."/>
            <person name="Burland V."/>
            <person name="Cabot E.L."/>
            <person name="Glasner J.D."/>
            <person name="Mau B."/>
            <person name="Neeno-Eckwall E."/>
            <person name="Perna N.T."/>
            <person name="Munk A.C."/>
            <person name="Tapia R."/>
            <person name="Green L.D."/>
            <person name="Rogers Y.C."/>
            <person name="Detter J.C."/>
            <person name="Bruce D.C."/>
            <person name="Brettin T.S."/>
        </authorList>
    </citation>
    <scope>NUCLEOTIDE SEQUENCE [LARGE SCALE GENOMIC DNA]</scope>
    <source>
        <strain>Nepal516</strain>
    </source>
</reference>
<organism>
    <name type="scientific">Yersinia pestis bv. Antiqua (strain Nepal516)</name>
    <dbReference type="NCBI Taxonomy" id="377628"/>
    <lineage>
        <taxon>Bacteria</taxon>
        <taxon>Pseudomonadati</taxon>
        <taxon>Pseudomonadota</taxon>
        <taxon>Gammaproteobacteria</taxon>
        <taxon>Enterobacterales</taxon>
        <taxon>Yersiniaceae</taxon>
        <taxon>Yersinia</taxon>
    </lineage>
</organism>
<feature type="chain" id="PRO_0000264140" description="Peptidyl-tRNA hydrolase">
    <location>
        <begin position="1"/>
        <end position="196"/>
    </location>
</feature>
<feature type="active site" description="Proton acceptor" evidence="1">
    <location>
        <position position="22"/>
    </location>
</feature>
<feature type="binding site" evidence="1">
    <location>
        <position position="17"/>
    </location>
    <ligand>
        <name>tRNA</name>
        <dbReference type="ChEBI" id="CHEBI:17843"/>
    </ligand>
</feature>
<feature type="binding site" evidence="1">
    <location>
        <position position="68"/>
    </location>
    <ligand>
        <name>tRNA</name>
        <dbReference type="ChEBI" id="CHEBI:17843"/>
    </ligand>
</feature>
<feature type="binding site" evidence="1">
    <location>
        <position position="70"/>
    </location>
    <ligand>
        <name>tRNA</name>
        <dbReference type="ChEBI" id="CHEBI:17843"/>
    </ligand>
</feature>
<feature type="binding site" evidence="1">
    <location>
        <position position="116"/>
    </location>
    <ligand>
        <name>tRNA</name>
        <dbReference type="ChEBI" id="CHEBI:17843"/>
    </ligand>
</feature>
<feature type="site" description="Discriminates between blocked and unblocked aminoacyl-tRNA" evidence="1">
    <location>
        <position position="12"/>
    </location>
</feature>
<feature type="site" description="Stabilizes the basic form of H active site to accept a proton" evidence="1">
    <location>
        <position position="95"/>
    </location>
</feature>
<protein>
    <recommendedName>
        <fullName evidence="1">Peptidyl-tRNA hydrolase</fullName>
        <shortName evidence="1">Pth</shortName>
        <ecNumber evidence="1">3.1.1.29</ecNumber>
    </recommendedName>
</protein>
<evidence type="ECO:0000255" key="1">
    <source>
        <dbReference type="HAMAP-Rule" id="MF_00083"/>
    </source>
</evidence>
<evidence type="ECO:0000305" key="2"/>
<keyword id="KW-0963">Cytoplasm</keyword>
<keyword id="KW-0378">Hydrolase</keyword>
<keyword id="KW-0694">RNA-binding</keyword>
<keyword id="KW-0820">tRNA-binding</keyword>
<gene>
    <name evidence="1" type="primary">pth</name>
    <name type="ordered locus">YPN_1492</name>
    <name type="ORF">YP516_1651</name>
</gene>
<accession>Q1CJK8</accession>
<accession>C4GSB3</accession>